<reference key="1">
    <citation type="journal article" date="2010" name="J. Bacteriol.">
        <title>Genome sequence of the dioxin-mineralizing bacterium Sphingomonas wittichii RW1.</title>
        <authorList>
            <person name="Miller T.R."/>
            <person name="Delcher A.L."/>
            <person name="Salzberg S.L."/>
            <person name="Saunders E."/>
            <person name="Detter J.C."/>
            <person name="Halden R.U."/>
        </authorList>
    </citation>
    <scope>NUCLEOTIDE SEQUENCE [LARGE SCALE GENOMIC DNA]</scope>
    <source>
        <strain>DSM 6014 / CCUG 31198 / JCM 15750 / NBRC 105917 / EY 4224 / RW1</strain>
    </source>
</reference>
<feature type="chain" id="PRO_1000020170" description="Methionyl-tRNA formyltransferase">
    <location>
        <begin position="1"/>
        <end position="308"/>
    </location>
</feature>
<feature type="binding site" evidence="1">
    <location>
        <begin position="109"/>
        <end position="112"/>
    </location>
    <ligand>
        <name>(6S)-5,6,7,8-tetrahydrofolate</name>
        <dbReference type="ChEBI" id="CHEBI:57453"/>
    </ligand>
</feature>
<accession>A5VDM0</accession>
<gene>
    <name evidence="1" type="primary">fmt</name>
    <name type="ordered locus">Swit_4042</name>
</gene>
<proteinExistence type="inferred from homology"/>
<name>FMT_RHIWR</name>
<organism>
    <name type="scientific">Rhizorhabdus wittichii (strain DSM 6014 / CCUG 31198 / JCM 15750 / NBRC 105917 / EY 4224 / RW1)</name>
    <name type="common">Sphingomonas wittichii</name>
    <dbReference type="NCBI Taxonomy" id="392499"/>
    <lineage>
        <taxon>Bacteria</taxon>
        <taxon>Pseudomonadati</taxon>
        <taxon>Pseudomonadota</taxon>
        <taxon>Alphaproteobacteria</taxon>
        <taxon>Sphingomonadales</taxon>
        <taxon>Sphingomonadaceae</taxon>
        <taxon>Rhizorhabdus</taxon>
    </lineage>
</organism>
<sequence>MRIAFMGTPDFAVPTLDALVAAGHELAAVYCQPPRPAGRGKALMPSPVQRRAEELGIPVRHPVTLRDADAQAVFAALALDVAVVAAYGLILPQPILDAPRHGCLNVHGSLLPRWRGAAPVQRAILAGDPTTGVTIMQMERGLDTGPMLATVETPVDGKTAGELTDELARSGAALMVEVLADLPAHPPVVQPEEGVTYAAKIDKAESRIDFAEAAGQIERQVRAFNPAPGAWFEHQGERIRILACEAVDRHGPEAPGAVIDDALTIACIDGAIRPTRVQRAGKAAMSAGELLRGFAIPAGTQLASPPRT</sequence>
<evidence type="ECO:0000255" key="1">
    <source>
        <dbReference type="HAMAP-Rule" id="MF_00182"/>
    </source>
</evidence>
<dbReference type="EC" id="2.1.2.9" evidence="1"/>
<dbReference type="EMBL" id="CP000699">
    <property type="protein sequence ID" value="ABQ70386.1"/>
    <property type="molecule type" value="Genomic_DNA"/>
</dbReference>
<dbReference type="SMR" id="A5VDM0"/>
<dbReference type="STRING" id="392499.Swit_4042"/>
<dbReference type="PaxDb" id="392499-Swit_4042"/>
<dbReference type="KEGG" id="swi:Swit_4042"/>
<dbReference type="eggNOG" id="COG0223">
    <property type="taxonomic scope" value="Bacteria"/>
</dbReference>
<dbReference type="HOGENOM" id="CLU_033347_1_2_5"/>
<dbReference type="OrthoDB" id="9802815at2"/>
<dbReference type="Proteomes" id="UP000001989">
    <property type="component" value="Chromosome"/>
</dbReference>
<dbReference type="GO" id="GO:0005829">
    <property type="term" value="C:cytosol"/>
    <property type="evidence" value="ECO:0007669"/>
    <property type="project" value="TreeGrafter"/>
</dbReference>
<dbReference type="GO" id="GO:0004479">
    <property type="term" value="F:methionyl-tRNA formyltransferase activity"/>
    <property type="evidence" value="ECO:0007669"/>
    <property type="project" value="UniProtKB-UniRule"/>
</dbReference>
<dbReference type="CDD" id="cd08646">
    <property type="entry name" value="FMT_core_Met-tRNA-FMT_N"/>
    <property type="match status" value="1"/>
</dbReference>
<dbReference type="CDD" id="cd08704">
    <property type="entry name" value="Met_tRNA_FMT_C"/>
    <property type="match status" value="1"/>
</dbReference>
<dbReference type="Gene3D" id="3.40.50.12230">
    <property type="match status" value="1"/>
</dbReference>
<dbReference type="HAMAP" id="MF_00182">
    <property type="entry name" value="Formyl_trans"/>
    <property type="match status" value="1"/>
</dbReference>
<dbReference type="InterPro" id="IPR005794">
    <property type="entry name" value="Fmt"/>
</dbReference>
<dbReference type="InterPro" id="IPR005793">
    <property type="entry name" value="Formyl_trans_C"/>
</dbReference>
<dbReference type="InterPro" id="IPR002376">
    <property type="entry name" value="Formyl_transf_N"/>
</dbReference>
<dbReference type="InterPro" id="IPR036477">
    <property type="entry name" value="Formyl_transf_N_sf"/>
</dbReference>
<dbReference type="InterPro" id="IPR011034">
    <property type="entry name" value="Formyl_transferase-like_C_sf"/>
</dbReference>
<dbReference type="InterPro" id="IPR044135">
    <property type="entry name" value="Met-tRNA-FMT_C"/>
</dbReference>
<dbReference type="InterPro" id="IPR041711">
    <property type="entry name" value="Met-tRNA-FMT_N"/>
</dbReference>
<dbReference type="NCBIfam" id="TIGR00460">
    <property type="entry name" value="fmt"/>
    <property type="match status" value="1"/>
</dbReference>
<dbReference type="PANTHER" id="PTHR11138">
    <property type="entry name" value="METHIONYL-TRNA FORMYLTRANSFERASE"/>
    <property type="match status" value="1"/>
</dbReference>
<dbReference type="PANTHER" id="PTHR11138:SF5">
    <property type="entry name" value="METHIONYL-TRNA FORMYLTRANSFERASE, MITOCHONDRIAL"/>
    <property type="match status" value="1"/>
</dbReference>
<dbReference type="Pfam" id="PF02911">
    <property type="entry name" value="Formyl_trans_C"/>
    <property type="match status" value="1"/>
</dbReference>
<dbReference type="Pfam" id="PF00551">
    <property type="entry name" value="Formyl_trans_N"/>
    <property type="match status" value="1"/>
</dbReference>
<dbReference type="SUPFAM" id="SSF50486">
    <property type="entry name" value="FMT C-terminal domain-like"/>
    <property type="match status" value="1"/>
</dbReference>
<dbReference type="SUPFAM" id="SSF53328">
    <property type="entry name" value="Formyltransferase"/>
    <property type="match status" value="1"/>
</dbReference>
<keyword id="KW-0648">Protein biosynthesis</keyword>
<keyword id="KW-1185">Reference proteome</keyword>
<keyword id="KW-0808">Transferase</keyword>
<protein>
    <recommendedName>
        <fullName evidence="1">Methionyl-tRNA formyltransferase</fullName>
        <ecNumber evidence="1">2.1.2.9</ecNumber>
    </recommendedName>
</protein>
<comment type="function">
    <text evidence="1">Attaches a formyl group to the free amino group of methionyl-tRNA(fMet). The formyl group appears to play a dual role in the initiator identity of N-formylmethionyl-tRNA by promoting its recognition by IF2 and preventing the misappropriation of this tRNA by the elongation apparatus.</text>
</comment>
<comment type="catalytic activity">
    <reaction evidence="1">
        <text>L-methionyl-tRNA(fMet) + (6R)-10-formyltetrahydrofolate = N-formyl-L-methionyl-tRNA(fMet) + (6S)-5,6,7,8-tetrahydrofolate + H(+)</text>
        <dbReference type="Rhea" id="RHEA:24380"/>
        <dbReference type="Rhea" id="RHEA-COMP:9952"/>
        <dbReference type="Rhea" id="RHEA-COMP:9953"/>
        <dbReference type="ChEBI" id="CHEBI:15378"/>
        <dbReference type="ChEBI" id="CHEBI:57453"/>
        <dbReference type="ChEBI" id="CHEBI:78530"/>
        <dbReference type="ChEBI" id="CHEBI:78844"/>
        <dbReference type="ChEBI" id="CHEBI:195366"/>
        <dbReference type="EC" id="2.1.2.9"/>
    </reaction>
</comment>
<comment type="similarity">
    <text evidence="1">Belongs to the Fmt family.</text>
</comment>